<name>LGUL_SCHPO</name>
<reference key="1">
    <citation type="journal article" date="2002" name="Nature">
        <title>The genome sequence of Schizosaccharomyces pombe.</title>
        <authorList>
            <person name="Wood V."/>
            <person name="Gwilliam R."/>
            <person name="Rajandream M.A."/>
            <person name="Lyne M.H."/>
            <person name="Lyne R."/>
            <person name="Stewart A."/>
            <person name="Sgouros J.G."/>
            <person name="Peat N."/>
            <person name="Hayles J."/>
            <person name="Baker S.G."/>
            <person name="Basham D."/>
            <person name="Bowman S."/>
            <person name="Brooks K."/>
            <person name="Brown D."/>
            <person name="Brown S."/>
            <person name="Chillingworth T."/>
            <person name="Churcher C.M."/>
            <person name="Collins M."/>
            <person name="Connor R."/>
            <person name="Cronin A."/>
            <person name="Davis P."/>
            <person name="Feltwell T."/>
            <person name="Fraser A."/>
            <person name="Gentles S."/>
            <person name="Goble A."/>
            <person name="Hamlin N."/>
            <person name="Harris D.E."/>
            <person name="Hidalgo J."/>
            <person name="Hodgson G."/>
            <person name="Holroyd S."/>
            <person name="Hornsby T."/>
            <person name="Howarth S."/>
            <person name="Huckle E.J."/>
            <person name="Hunt S."/>
            <person name="Jagels K."/>
            <person name="James K.D."/>
            <person name="Jones L."/>
            <person name="Jones M."/>
            <person name="Leather S."/>
            <person name="McDonald S."/>
            <person name="McLean J."/>
            <person name="Mooney P."/>
            <person name="Moule S."/>
            <person name="Mungall K.L."/>
            <person name="Murphy L.D."/>
            <person name="Niblett D."/>
            <person name="Odell C."/>
            <person name="Oliver K."/>
            <person name="O'Neil S."/>
            <person name="Pearson D."/>
            <person name="Quail M.A."/>
            <person name="Rabbinowitsch E."/>
            <person name="Rutherford K.M."/>
            <person name="Rutter S."/>
            <person name="Saunders D."/>
            <person name="Seeger K."/>
            <person name="Sharp S."/>
            <person name="Skelton J."/>
            <person name="Simmonds M.N."/>
            <person name="Squares R."/>
            <person name="Squares S."/>
            <person name="Stevens K."/>
            <person name="Taylor K."/>
            <person name="Taylor R.G."/>
            <person name="Tivey A."/>
            <person name="Walsh S.V."/>
            <person name="Warren T."/>
            <person name="Whitehead S."/>
            <person name="Woodward J.R."/>
            <person name="Volckaert G."/>
            <person name="Aert R."/>
            <person name="Robben J."/>
            <person name="Grymonprez B."/>
            <person name="Weltjens I."/>
            <person name="Vanstreels E."/>
            <person name="Rieger M."/>
            <person name="Schaefer M."/>
            <person name="Mueller-Auer S."/>
            <person name="Gabel C."/>
            <person name="Fuchs M."/>
            <person name="Duesterhoeft A."/>
            <person name="Fritzc C."/>
            <person name="Holzer E."/>
            <person name="Moestl D."/>
            <person name="Hilbert H."/>
            <person name="Borzym K."/>
            <person name="Langer I."/>
            <person name="Beck A."/>
            <person name="Lehrach H."/>
            <person name="Reinhardt R."/>
            <person name="Pohl T.M."/>
            <person name="Eger P."/>
            <person name="Zimmermann W."/>
            <person name="Wedler H."/>
            <person name="Wambutt R."/>
            <person name="Purnelle B."/>
            <person name="Goffeau A."/>
            <person name="Cadieu E."/>
            <person name="Dreano S."/>
            <person name="Gloux S."/>
            <person name="Lelaure V."/>
            <person name="Mottier S."/>
            <person name="Galibert F."/>
            <person name="Aves S.J."/>
            <person name="Xiang Z."/>
            <person name="Hunt C."/>
            <person name="Moore K."/>
            <person name="Hurst S.M."/>
            <person name="Lucas M."/>
            <person name="Rochet M."/>
            <person name="Gaillardin C."/>
            <person name="Tallada V.A."/>
            <person name="Garzon A."/>
            <person name="Thode G."/>
            <person name="Daga R.R."/>
            <person name="Cruzado L."/>
            <person name="Jimenez J."/>
            <person name="Sanchez M."/>
            <person name="del Rey F."/>
            <person name="Benito J."/>
            <person name="Dominguez A."/>
            <person name="Revuelta J.L."/>
            <person name="Moreno S."/>
            <person name="Armstrong J."/>
            <person name="Forsburg S.L."/>
            <person name="Cerutti L."/>
            <person name="Lowe T."/>
            <person name="McCombie W.R."/>
            <person name="Paulsen I."/>
            <person name="Potashkin J."/>
            <person name="Shpakovski G.V."/>
            <person name="Ussery D."/>
            <person name="Barrell B.G."/>
            <person name="Nurse P."/>
        </authorList>
    </citation>
    <scope>NUCLEOTIDE SEQUENCE [LARGE SCALE GENOMIC DNA]</scope>
    <source>
        <strain>972 / ATCC 24843</strain>
    </source>
</reference>
<reference key="2">
    <citation type="journal article" date="2004" name="Arch. Microbiol.">
        <title>Identification of thermostable glyoxalase I in the fission yeast Schizosaccharomyces pombe.</title>
        <authorList>
            <person name="Takatsume Y."/>
            <person name="Izawa S."/>
            <person name="Inoue Y."/>
        </authorList>
    </citation>
    <scope>FUNCTION</scope>
    <scope>CATALYTIC ACTIVITY</scope>
    <scope>COFACTOR</scope>
    <scope>BIOPHYSICOCHEMICAL PROPERTIES</scope>
    <scope>PATHWAY</scope>
    <scope>SUBUNIT</scope>
</reference>
<accession>Q09751</accession>
<keyword id="KW-0170">Cobalt</keyword>
<keyword id="KW-0456">Lyase</keyword>
<keyword id="KW-0464">Manganese</keyword>
<keyword id="KW-0479">Metal-binding</keyword>
<keyword id="KW-0533">Nickel</keyword>
<keyword id="KW-1185">Reference proteome</keyword>
<keyword id="KW-0677">Repeat</keyword>
<keyword id="KW-0862">Zinc</keyword>
<organism>
    <name type="scientific">Schizosaccharomyces pombe (strain 972 / ATCC 24843)</name>
    <name type="common">Fission yeast</name>
    <dbReference type="NCBI Taxonomy" id="284812"/>
    <lineage>
        <taxon>Eukaryota</taxon>
        <taxon>Fungi</taxon>
        <taxon>Dikarya</taxon>
        <taxon>Ascomycota</taxon>
        <taxon>Taphrinomycotina</taxon>
        <taxon>Schizosaccharomycetes</taxon>
        <taxon>Schizosaccharomycetales</taxon>
        <taxon>Schizosaccharomycetaceae</taxon>
        <taxon>Schizosaccharomyces</taxon>
    </lineage>
</organism>
<protein>
    <recommendedName>
        <fullName>Lactoylglutathione lyase</fullName>
        <ecNumber evidence="4">4.4.1.5</ecNumber>
    </recommendedName>
    <alternativeName>
        <fullName>Aldoketomutase</fullName>
    </alternativeName>
    <alternativeName>
        <fullName>Glyoxalase I</fullName>
        <shortName>Glx I</shortName>
    </alternativeName>
    <alternativeName>
        <fullName>Ketone-aldehyde mutase</fullName>
    </alternativeName>
    <alternativeName>
        <fullName>Methylglyoxalase</fullName>
    </alternativeName>
    <alternativeName>
        <fullName>S-D-lactoylglutathione methylglyoxal lyase</fullName>
    </alternativeName>
</protein>
<comment type="function">
    <text evidence="4">Catalyzes the conversion of hemimercaptal, formed from methylglyoxal and glutathione, to S-lactoylglutathione.</text>
</comment>
<comment type="catalytic activity">
    <reaction evidence="3">
        <text>(R)-S-lactoylglutathione = methylglyoxal + glutathione</text>
        <dbReference type="Rhea" id="RHEA:19069"/>
        <dbReference type="ChEBI" id="CHEBI:17158"/>
        <dbReference type="ChEBI" id="CHEBI:57474"/>
        <dbReference type="ChEBI" id="CHEBI:57925"/>
        <dbReference type="EC" id="4.4.1.5"/>
    </reaction>
    <physiologicalReaction direction="right-to-left" evidence="6">
        <dbReference type="Rhea" id="RHEA:19071"/>
    </physiologicalReaction>
</comment>
<comment type="cofactor">
    <cofactor evidence="4">
        <name>Zn(2+)</name>
        <dbReference type="ChEBI" id="CHEBI:29105"/>
    </cofactor>
    <cofactor evidence="4">
        <name>Cu(2+)</name>
        <dbReference type="ChEBI" id="CHEBI:29036"/>
    </cofactor>
    <cofactor evidence="4">
        <name>Ni(2+)</name>
        <dbReference type="ChEBI" id="CHEBI:49786"/>
    </cofactor>
    <cofactor evidence="4">
        <name>Mn(2+)</name>
        <dbReference type="ChEBI" id="CHEBI:29035"/>
    </cofactor>
    <text evidence="4">Binds 1 zinc ion per subunit. Cobalt, nickel and manganese ions can also function as cofactors.</text>
</comment>
<comment type="biophysicochemical properties">
    <kinetics>
        <KM evidence="4">1.6 mM for methylglyoxal (at pH 7.0 and 25 degrees Celsius)</KM>
        <KM evidence="4">0.8 mM for glutathione (at pH 7.0 and 25 degrees Celsius)</KM>
        <KM evidence="4">0.24 mM for phenylglyoxal (at pH 7.0 and 25 degrees Celsius)</KM>
        <Vmax evidence="4">2.0 mmol/min/mg enzyme with methylglyoxal as substrate (at pH 7.0 and 25 degrees Celsius)</Vmax>
        <Vmax evidence="4">197.0 umol/min/mg enzyme with phenylglyoxal as substrate (at pH 7.0 and 25 degrees Celsius)</Vmax>
    </kinetics>
    <phDependence>
        <text evidence="4">Optimum pH is 5.5-7.5.</text>
    </phDependence>
</comment>
<comment type="pathway">
    <text evidence="6">Secondary metabolite metabolism; methylglyoxal degradation; (R)-lactate from methylglyoxal: step 1/2.</text>
</comment>
<comment type="subunit">
    <text evidence="4">Monomer.</text>
</comment>
<comment type="similarity">
    <text evidence="5">Belongs to the glyoxalase I family.</text>
</comment>
<sequence>MASTTDMSTYKLNHTMIRVKDLDKSLKFYTEVFGMKLIDQWVFEENEFSLSFLAFDGPGALNHGVERSKREGILELTYNFGTEKKEGPVYINGNTEPKRGFGHICFTVDNIESACAYLESKGVSFKKKLSDGKMKHIAFALDPDNYWIELVSQSETKPKANISNFRFNHTMVRVKDPEPSIAFYEKLGMKVIDKADHPNGKFTNYFLAYPSDLPRHDREGLLELTHNWGTEKESGPVYHNGNDGDEKGYGHVCISVDNINAACSKFEAEGLPFKKKLTDGRMKDIAFLLDPDNYWVEVIEQK</sequence>
<proteinExistence type="evidence at protein level"/>
<gene>
    <name type="primary">glo1</name>
    <name type="ORF">SPBC12C2.12c</name>
    <name type="ORF">SPBC21D10.03c</name>
</gene>
<evidence type="ECO:0000250" key="1"/>
<evidence type="ECO:0000255" key="2">
    <source>
        <dbReference type="PROSITE-ProRule" id="PRU01163"/>
    </source>
</evidence>
<evidence type="ECO:0000269" key="3">
    <source>
    </source>
</evidence>
<evidence type="ECO:0000269" key="4">
    <source>
    </source>
</evidence>
<evidence type="ECO:0000305" key="5"/>
<evidence type="ECO:0000305" key="6">
    <source>
    </source>
</evidence>
<feature type="chain" id="PRO_0000168086" description="Lactoylglutathione lyase">
    <location>
        <begin position="1"/>
        <end position="302"/>
    </location>
</feature>
<feature type="domain" description="VOC 1" evidence="2">
    <location>
        <begin position="11"/>
        <end position="153"/>
    </location>
</feature>
<feature type="domain" description="VOC 2" evidence="2">
    <location>
        <begin position="166"/>
        <end position="301"/>
    </location>
</feature>
<feature type="active site" description="Proton donor/acceptor" evidence="1">
    <location>
        <position position="149"/>
    </location>
</feature>
<feature type="binding site" evidence="1">
    <location>
        <position position="14"/>
    </location>
    <ligand>
        <name>Zn(2+)</name>
        <dbReference type="ChEBI" id="CHEBI:29105"/>
        <note>ligand shared between dimeric partners</note>
    </ligand>
</feature>
<feature type="binding site" evidence="1">
    <location>
        <position position="18"/>
    </location>
    <ligand>
        <name>substrate</name>
    </ligand>
</feature>
<feature type="binding site" evidence="1">
    <location>
        <position position="75"/>
    </location>
    <ligand>
        <name>Zn(2+)</name>
        <dbReference type="ChEBI" id="CHEBI:29105"/>
        <note>ligand shared between dimeric partners</note>
    </ligand>
</feature>
<feature type="binding site" evidence="1">
    <location>
        <position position="79"/>
    </location>
    <ligand>
        <name>substrate</name>
    </ligand>
</feature>
<feature type="binding site" evidence="1">
    <location>
        <position position="99"/>
    </location>
    <ligand>
        <name>substrate</name>
    </ligand>
</feature>
<feature type="binding site" evidence="1">
    <location>
        <position position="103"/>
    </location>
    <ligand>
        <name>substrate</name>
    </ligand>
</feature>
<feature type="binding site" description="in other chain" evidence="1">
    <location>
        <position position="103"/>
    </location>
    <ligand>
        <name>Zn(2+)</name>
        <dbReference type="ChEBI" id="CHEBI:29105"/>
        <note>ligand shared between dimeric partners</note>
    </ligand>
</feature>
<feature type="binding site" description="in other chain" evidence="1">
    <location>
        <position position="149"/>
    </location>
    <ligand>
        <name>Zn(2+)</name>
        <dbReference type="ChEBI" id="CHEBI:29105"/>
        <note>ligand shared between dimeric partners</note>
    </ligand>
</feature>
<dbReference type="EC" id="4.4.1.5" evidence="4"/>
<dbReference type="EMBL" id="CU329671">
    <property type="protein sequence ID" value="CAA20759.1"/>
    <property type="molecule type" value="Genomic_DNA"/>
</dbReference>
<dbReference type="PIR" id="T11675">
    <property type="entry name" value="T11675"/>
</dbReference>
<dbReference type="RefSeq" id="NP_596010.1">
    <property type="nucleotide sequence ID" value="NM_001021918.2"/>
</dbReference>
<dbReference type="SMR" id="Q09751"/>
<dbReference type="BioGRID" id="276288">
    <property type="interactions" value="22"/>
</dbReference>
<dbReference type="FunCoup" id="Q09751">
    <property type="interactions" value="39"/>
</dbReference>
<dbReference type="STRING" id="284812.Q09751"/>
<dbReference type="iPTMnet" id="Q09751"/>
<dbReference type="PaxDb" id="4896-SPBC12C2.12c.1"/>
<dbReference type="EnsemblFungi" id="SPBC12C2.12c.1">
    <property type="protein sequence ID" value="SPBC12C2.12c.1:pep"/>
    <property type="gene ID" value="SPBC12C2.12c"/>
</dbReference>
<dbReference type="GeneID" id="2539736"/>
<dbReference type="KEGG" id="spo:2539736"/>
<dbReference type="PomBase" id="SPBC12C2.12c">
    <property type="gene designation" value="glo1"/>
</dbReference>
<dbReference type="VEuPathDB" id="FungiDB:SPBC12C2.12c"/>
<dbReference type="eggNOG" id="KOG2944">
    <property type="taxonomic scope" value="Eukaryota"/>
</dbReference>
<dbReference type="HOGENOM" id="CLU_046006_0_1_1"/>
<dbReference type="InParanoid" id="Q09751"/>
<dbReference type="OMA" id="MGDAWGH"/>
<dbReference type="PhylomeDB" id="Q09751"/>
<dbReference type="Reactome" id="R-SPO-70268">
    <property type="pathway name" value="Pyruvate metabolism"/>
</dbReference>
<dbReference type="SABIO-RK" id="Q09751"/>
<dbReference type="UniPathway" id="UPA00619">
    <property type="reaction ID" value="UER00675"/>
</dbReference>
<dbReference type="PRO" id="PR:Q09751"/>
<dbReference type="Proteomes" id="UP000002485">
    <property type="component" value="Chromosome II"/>
</dbReference>
<dbReference type="GO" id="GO:0005829">
    <property type="term" value="C:cytosol"/>
    <property type="evidence" value="ECO:0007005"/>
    <property type="project" value="PomBase"/>
</dbReference>
<dbReference type="GO" id="GO:0005634">
    <property type="term" value="C:nucleus"/>
    <property type="evidence" value="ECO:0007005"/>
    <property type="project" value="PomBase"/>
</dbReference>
<dbReference type="GO" id="GO:0004462">
    <property type="term" value="F:lactoylglutathione lyase activity"/>
    <property type="evidence" value="ECO:0000314"/>
    <property type="project" value="PomBase"/>
</dbReference>
<dbReference type="GO" id="GO:0008270">
    <property type="term" value="F:zinc ion binding"/>
    <property type="evidence" value="ECO:0000314"/>
    <property type="project" value="PomBase"/>
</dbReference>
<dbReference type="GO" id="GO:1990748">
    <property type="term" value="P:cellular detoxification"/>
    <property type="evidence" value="ECO:0000303"/>
    <property type="project" value="PomBase"/>
</dbReference>
<dbReference type="GO" id="GO:0071470">
    <property type="term" value="P:cellular response to osmotic stress"/>
    <property type="evidence" value="ECO:0000304"/>
    <property type="project" value="PomBase"/>
</dbReference>
<dbReference type="GO" id="GO:0006749">
    <property type="term" value="P:glutathione metabolic process"/>
    <property type="evidence" value="ECO:0000314"/>
    <property type="project" value="PomBase"/>
</dbReference>
<dbReference type="GO" id="GO:0019243">
    <property type="term" value="P:methylglyoxal catabolic process to D-lactate via S-lactoyl-glutathione"/>
    <property type="evidence" value="ECO:0000315"/>
    <property type="project" value="PomBase"/>
</dbReference>
<dbReference type="CDD" id="cd07233">
    <property type="entry name" value="GlxI_Zn"/>
    <property type="match status" value="2"/>
</dbReference>
<dbReference type="Gene3D" id="3.10.180.10">
    <property type="entry name" value="2,3-Dihydroxybiphenyl 1,2-Dioxygenase, domain 1"/>
    <property type="match status" value="2"/>
</dbReference>
<dbReference type="InterPro" id="IPR029068">
    <property type="entry name" value="Glyas_Bleomycin-R_OHBP_Dase"/>
</dbReference>
<dbReference type="InterPro" id="IPR004360">
    <property type="entry name" value="Glyas_Fos-R_dOase_dom"/>
</dbReference>
<dbReference type="InterPro" id="IPR004361">
    <property type="entry name" value="Glyoxalase_1"/>
</dbReference>
<dbReference type="InterPro" id="IPR018146">
    <property type="entry name" value="Glyoxalase_1_CS"/>
</dbReference>
<dbReference type="InterPro" id="IPR037523">
    <property type="entry name" value="VOC"/>
</dbReference>
<dbReference type="NCBIfam" id="TIGR00068">
    <property type="entry name" value="glyox_I"/>
    <property type="match status" value="2"/>
</dbReference>
<dbReference type="PANTHER" id="PTHR10374:SF30">
    <property type="entry name" value="LACTOYLGLUTATHIONE LYASE"/>
    <property type="match status" value="1"/>
</dbReference>
<dbReference type="PANTHER" id="PTHR10374">
    <property type="entry name" value="LACTOYLGLUTATHIONE LYASE GLYOXALASE I"/>
    <property type="match status" value="1"/>
</dbReference>
<dbReference type="Pfam" id="PF00903">
    <property type="entry name" value="Glyoxalase"/>
    <property type="match status" value="2"/>
</dbReference>
<dbReference type="SUPFAM" id="SSF54593">
    <property type="entry name" value="Glyoxalase/Bleomycin resistance protein/Dihydroxybiphenyl dioxygenase"/>
    <property type="match status" value="2"/>
</dbReference>
<dbReference type="PROSITE" id="PS00934">
    <property type="entry name" value="GLYOXALASE_I_1"/>
    <property type="match status" value="2"/>
</dbReference>
<dbReference type="PROSITE" id="PS00935">
    <property type="entry name" value="GLYOXALASE_I_2"/>
    <property type="match status" value="2"/>
</dbReference>
<dbReference type="PROSITE" id="PS51819">
    <property type="entry name" value="VOC"/>
    <property type="match status" value="2"/>
</dbReference>